<evidence type="ECO:0000250" key="1"/>
<evidence type="ECO:0000255" key="2"/>
<evidence type="ECO:0000305" key="3"/>
<geneLocation type="chloroplast"/>
<protein>
    <recommendedName>
        <fullName>NAD(P)H-quinone oxidoreductase subunit 5, chloroplastic</fullName>
        <ecNumber>7.1.1.-</ecNumber>
    </recommendedName>
    <alternativeName>
        <fullName>NAD(P)H dehydrogenase subunit 5</fullName>
    </alternativeName>
    <alternativeName>
        <fullName>NADH-plastoquinone oxidoreductase subunit 5</fullName>
    </alternativeName>
</protein>
<accession>P51098</accession>
<dbReference type="EC" id="7.1.1.-"/>
<dbReference type="EMBL" id="L39455">
    <property type="protein sequence ID" value="AAC37724.1"/>
    <property type="molecule type" value="Genomic_DNA"/>
</dbReference>
<dbReference type="SMR" id="P51098"/>
<dbReference type="GO" id="GO:0009535">
    <property type="term" value="C:chloroplast thylakoid membrane"/>
    <property type="evidence" value="ECO:0007669"/>
    <property type="project" value="UniProtKB-SubCell"/>
</dbReference>
<dbReference type="GO" id="GO:0008137">
    <property type="term" value="F:NADH dehydrogenase (ubiquinone) activity"/>
    <property type="evidence" value="ECO:0007669"/>
    <property type="project" value="InterPro"/>
</dbReference>
<dbReference type="GO" id="GO:0048038">
    <property type="term" value="F:quinone binding"/>
    <property type="evidence" value="ECO:0007669"/>
    <property type="project" value="UniProtKB-KW"/>
</dbReference>
<dbReference type="GO" id="GO:0042773">
    <property type="term" value="P:ATP synthesis coupled electron transport"/>
    <property type="evidence" value="ECO:0007669"/>
    <property type="project" value="InterPro"/>
</dbReference>
<dbReference type="GO" id="GO:0015990">
    <property type="term" value="P:electron transport coupled proton transport"/>
    <property type="evidence" value="ECO:0007669"/>
    <property type="project" value="TreeGrafter"/>
</dbReference>
<dbReference type="Gene3D" id="1.20.5.2700">
    <property type="match status" value="1"/>
</dbReference>
<dbReference type="InterPro" id="IPR002128">
    <property type="entry name" value="NADH_UbQ_OxRdtase_chlpt_su5_C"/>
</dbReference>
<dbReference type="InterPro" id="IPR018393">
    <property type="entry name" value="NADHpl_OxRdtase_5_subgr"/>
</dbReference>
<dbReference type="InterPro" id="IPR001750">
    <property type="entry name" value="ND/Mrp_TM"/>
</dbReference>
<dbReference type="InterPro" id="IPR003945">
    <property type="entry name" value="NU5C-like"/>
</dbReference>
<dbReference type="InterPro" id="IPR001516">
    <property type="entry name" value="Proton_antipo_N"/>
</dbReference>
<dbReference type="NCBIfam" id="TIGR01974">
    <property type="entry name" value="NDH_I_L"/>
    <property type="match status" value="1"/>
</dbReference>
<dbReference type="NCBIfam" id="NF005141">
    <property type="entry name" value="PRK06590.1"/>
    <property type="match status" value="1"/>
</dbReference>
<dbReference type="PANTHER" id="PTHR42829">
    <property type="entry name" value="NADH-UBIQUINONE OXIDOREDUCTASE CHAIN 5"/>
    <property type="match status" value="1"/>
</dbReference>
<dbReference type="PANTHER" id="PTHR42829:SF2">
    <property type="entry name" value="NADH-UBIQUINONE OXIDOREDUCTASE CHAIN 5"/>
    <property type="match status" value="1"/>
</dbReference>
<dbReference type="Pfam" id="PF01010">
    <property type="entry name" value="Proton_antipo_C"/>
    <property type="match status" value="1"/>
</dbReference>
<dbReference type="Pfam" id="PF00361">
    <property type="entry name" value="Proton_antipo_M"/>
    <property type="match status" value="1"/>
</dbReference>
<dbReference type="Pfam" id="PF00662">
    <property type="entry name" value="Proton_antipo_N"/>
    <property type="match status" value="1"/>
</dbReference>
<dbReference type="PRINTS" id="PR01434">
    <property type="entry name" value="NADHDHGNASE5"/>
</dbReference>
<dbReference type="PRINTS" id="PR01435">
    <property type="entry name" value="NPOXDRDTASE5"/>
</dbReference>
<comment type="function">
    <text evidence="1">NDH shuttles electrons from NAD(P)H:plastoquinone, via FMN and iron-sulfur (Fe-S) centers, to quinones in the photosynthetic chain and possibly in a chloroplast respiratory chain. The immediate electron acceptor for the enzyme in this species is believed to be plastoquinone. Couples the redox reaction to proton translocation, and thus conserves the redox energy in a proton gradient (By similarity).</text>
</comment>
<comment type="catalytic activity">
    <reaction>
        <text>a plastoquinone + NADH + (n+1) H(+)(in) = a plastoquinol + NAD(+) + n H(+)(out)</text>
        <dbReference type="Rhea" id="RHEA:42608"/>
        <dbReference type="Rhea" id="RHEA-COMP:9561"/>
        <dbReference type="Rhea" id="RHEA-COMP:9562"/>
        <dbReference type="ChEBI" id="CHEBI:15378"/>
        <dbReference type="ChEBI" id="CHEBI:17757"/>
        <dbReference type="ChEBI" id="CHEBI:57540"/>
        <dbReference type="ChEBI" id="CHEBI:57945"/>
        <dbReference type="ChEBI" id="CHEBI:62192"/>
    </reaction>
</comment>
<comment type="catalytic activity">
    <reaction>
        <text>a plastoquinone + NADPH + (n+1) H(+)(in) = a plastoquinol + NADP(+) + n H(+)(out)</text>
        <dbReference type="Rhea" id="RHEA:42612"/>
        <dbReference type="Rhea" id="RHEA-COMP:9561"/>
        <dbReference type="Rhea" id="RHEA-COMP:9562"/>
        <dbReference type="ChEBI" id="CHEBI:15378"/>
        <dbReference type="ChEBI" id="CHEBI:17757"/>
        <dbReference type="ChEBI" id="CHEBI:57783"/>
        <dbReference type="ChEBI" id="CHEBI:58349"/>
        <dbReference type="ChEBI" id="CHEBI:62192"/>
    </reaction>
</comment>
<comment type="subunit">
    <text evidence="1">NDH is composed of at least 16 different subunits, 5 of which are encoded in the nucleus.</text>
</comment>
<comment type="subcellular location">
    <subcellularLocation>
        <location evidence="1">Plastid</location>
        <location evidence="1">Chloroplast thylakoid membrane</location>
        <topology evidence="1">Multi-pass membrane protein</topology>
    </subcellularLocation>
</comment>
<comment type="similarity">
    <text evidence="3">Belongs to the complex I subunit 5 family.</text>
</comment>
<proteinExistence type="inferred from homology"/>
<name>NU5C_ATHGR</name>
<organism>
    <name type="scientific">Athroisma gracile</name>
    <dbReference type="NCBI Taxonomy" id="41482"/>
    <lineage>
        <taxon>Eukaryota</taxon>
        <taxon>Viridiplantae</taxon>
        <taxon>Streptophyta</taxon>
        <taxon>Embryophyta</taxon>
        <taxon>Tracheophyta</taxon>
        <taxon>Spermatophyta</taxon>
        <taxon>Magnoliopsida</taxon>
        <taxon>eudicotyledons</taxon>
        <taxon>Gunneridae</taxon>
        <taxon>Pentapetalae</taxon>
        <taxon>asterids</taxon>
        <taxon>campanulids</taxon>
        <taxon>Asterales</taxon>
        <taxon>Asteraceae</taxon>
        <taxon>Asteroideae</taxon>
        <taxon>Athroismeae</taxon>
        <taxon>Athroisminae</taxon>
        <taxon>Athroisma</taxon>
    </lineage>
</organism>
<feature type="chain" id="PRO_0000118171" description="NAD(P)H-quinone oxidoreductase subunit 5, chloroplastic">
    <location>
        <begin position="1"/>
        <end position="741"/>
    </location>
</feature>
<feature type="transmembrane region" description="Helical" evidence="2">
    <location>
        <begin position="9"/>
        <end position="29"/>
    </location>
</feature>
<feature type="transmembrane region" description="Helical" evidence="2">
    <location>
        <begin position="40"/>
        <end position="60"/>
    </location>
</feature>
<feature type="transmembrane region" description="Helical" evidence="2">
    <location>
        <begin position="89"/>
        <end position="109"/>
    </location>
</feature>
<feature type="transmembrane region" description="Helical" evidence="2">
    <location>
        <begin position="125"/>
        <end position="145"/>
    </location>
</feature>
<feature type="transmembrane region" description="Helical" evidence="2">
    <location>
        <begin position="147"/>
        <end position="167"/>
    </location>
</feature>
<feature type="transmembrane region" description="Helical" evidence="2">
    <location>
        <begin position="185"/>
        <end position="205"/>
    </location>
</feature>
<feature type="transmembrane region" description="Helical" evidence="2">
    <location>
        <begin position="219"/>
        <end position="239"/>
    </location>
</feature>
<feature type="transmembrane region" description="Helical" evidence="2">
    <location>
        <begin position="258"/>
        <end position="278"/>
    </location>
</feature>
<feature type="transmembrane region" description="Helical" evidence="2">
    <location>
        <begin position="283"/>
        <end position="303"/>
    </location>
</feature>
<feature type="transmembrane region" description="Helical" evidence="2">
    <location>
        <begin position="327"/>
        <end position="347"/>
    </location>
</feature>
<feature type="transmembrane region" description="Helical" evidence="2">
    <location>
        <begin position="354"/>
        <end position="374"/>
    </location>
</feature>
<feature type="transmembrane region" description="Helical" evidence="2">
    <location>
        <begin position="396"/>
        <end position="416"/>
    </location>
</feature>
<feature type="transmembrane region" description="Helical" evidence="2">
    <location>
        <begin position="425"/>
        <end position="445"/>
    </location>
</feature>
<feature type="transmembrane region" description="Helical" evidence="2">
    <location>
        <begin position="549"/>
        <end position="569"/>
    </location>
</feature>
<feature type="transmembrane region" description="Helical" evidence="2">
    <location>
        <begin position="605"/>
        <end position="625"/>
    </location>
</feature>
<feature type="transmembrane region" description="Helical" evidence="2">
    <location>
        <begin position="718"/>
        <end position="738"/>
    </location>
</feature>
<sequence>MEQTYQYAWIIPFLPLPVPMLIGLGLLLFPTATKSLRRMWAFQSVLLLSIVMIFSMNLSIQQINSSSVYQYVWSWIINNDFSLEFGYLIDPLTSIMSILITTVGIMVLIYSDNYMSHDHGYLRFFAYMSFFSTSMLGLVTSSNLIQIYIFWELVGMCSYLLIGFWFTRPVAAKACQKAFVTNRVGDFGLLLGILGFYWITGSFEFRDLFQIFNNLISNNEVNFLFVTLCAVLLFAGAIAKSAQFPLHVWLPDAMEGPTPISALIHAATMVAAGIFLVARLMPLFIVIPHIMNFISLIGIITVFLGATLALAQKDIKRGLAYSTMSQLGYMMLALGMGSYRSALFHLITHAYSKALLFLGSGSVIHSMETLVGYCPKKSQNMVLMGGLTKHVPITKNSFLLGTLSLCGIPPLACFWSKDEILNDSWLYSPIFAIIAWSTAGLTAFYMCRIYLLTFEGHLNVHFQNYSGKRNTPLYSISLWGKEGSKISNKNFRLVTLLKMKKNGRPSFFSNKVYKMDENVRNLIQPFLSIPNFGNTKTSLYPYESDNTMLFPILILILFTLFVGFLGIPFNQDVDILSKWLTPSINLLHKNSNNSIDWYEFCKDAVFSVSIASFGIFIAFFLYKPVYSSFQNLDLINSFVKIGPKRIFSDKIKKAIYDWSYNRGYIDAFDGTFLTVGMRKLAEFTHFFDRRIIDGIPNGVGLMSFFVAEVIKSVGGGRISSYLFFYFSYVSIFLLIYYFLNY</sequence>
<gene>
    <name type="primary">ndhF</name>
</gene>
<keyword id="KW-0150">Chloroplast</keyword>
<keyword id="KW-0472">Membrane</keyword>
<keyword id="KW-0520">NAD</keyword>
<keyword id="KW-0521">NADP</keyword>
<keyword id="KW-0934">Plastid</keyword>
<keyword id="KW-0618">Plastoquinone</keyword>
<keyword id="KW-0874">Quinone</keyword>
<keyword id="KW-0793">Thylakoid</keyword>
<keyword id="KW-1278">Translocase</keyword>
<keyword id="KW-0812">Transmembrane</keyword>
<keyword id="KW-1133">Transmembrane helix</keyword>
<keyword id="KW-0813">Transport</keyword>
<reference key="1">
    <citation type="journal article" date="1995" name="Proc. Natl. Acad. Sci. U.S.A.">
        <title>ndhF sequence evolution and the major clades in the sunflower family.</title>
        <authorList>
            <person name="Kim K.-J."/>
            <person name="Jansen R.K."/>
        </authorList>
    </citation>
    <scope>NUCLEOTIDE SEQUENCE [GENOMIC DNA]</scope>
</reference>